<feature type="chain" id="PRO_1000008931" description="Adenosine 5'-phosphosulfate reductase">
    <location>
        <begin position="1"/>
        <end position="240"/>
    </location>
</feature>
<feature type="active site" description="Nucleophile; cysteine thiosulfonate intermediate" evidence="1">
    <location>
        <position position="234"/>
    </location>
</feature>
<feature type="binding site" evidence="1">
    <location>
        <position position="125"/>
    </location>
    <ligand>
        <name>[4Fe-4S] cluster</name>
        <dbReference type="ChEBI" id="CHEBI:49883"/>
    </ligand>
</feature>
<feature type="binding site" evidence="1">
    <location>
        <position position="126"/>
    </location>
    <ligand>
        <name>[4Fe-4S] cluster</name>
        <dbReference type="ChEBI" id="CHEBI:49883"/>
    </ligand>
</feature>
<feature type="binding site" evidence="1">
    <location>
        <position position="208"/>
    </location>
    <ligand>
        <name>[4Fe-4S] cluster</name>
        <dbReference type="ChEBI" id="CHEBI:49883"/>
    </ligand>
</feature>
<feature type="binding site" evidence="1">
    <location>
        <position position="211"/>
    </location>
    <ligand>
        <name>[4Fe-4S] cluster</name>
        <dbReference type="ChEBI" id="CHEBI:49883"/>
    </ligand>
</feature>
<protein>
    <recommendedName>
        <fullName evidence="1">Adenosine 5'-phosphosulfate reductase</fullName>
        <shortName evidence="1">APS reductase</shortName>
        <ecNumber evidence="1">1.8.4.10</ecNumber>
    </recommendedName>
    <alternativeName>
        <fullName evidence="1">5'-adenylylsulfate reductase</fullName>
    </alternativeName>
    <alternativeName>
        <fullName evidence="1">Thioredoxin-dependent 5'-adenylylsulfate reductase</fullName>
    </alternativeName>
</protein>
<proteinExistence type="inferred from homology"/>
<name>CYSH_OCEIH</name>
<keyword id="KW-0963">Cytoplasm</keyword>
<keyword id="KW-0408">Iron</keyword>
<keyword id="KW-0411">Iron-sulfur</keyword>
<keyword id="KW-0479">Metal-binding</keyword>
<keyword id="KW-0560">Oxidoreductase</keyword>
<keyword id="KW-1185">Reference proteome</keyword>
<gene>
    <name evidence="1" type="primary">cysH</name>
    <name type="ordered locus">OB1652</name>
</gene>
<sequence length="240" mass="27407">MGGYSVTYSNFVKDPYKDWFPDDETNGASKILQWAYEVYGTDIVYACSFGAEGMVLIDLISKTQKNADIVFLDTDLHFQETYDLIEDIKVKYPTLNIHIKKPDLTLEEQAAEHGSALWKRQPDQCCYIRKIKPLEDALSGAPAWISGLRREQSVSRSKTDFINKDERFKSIKVCPLIHWTWDDVWEYIKDNNLPYNELHDNGYPSIGCIPCTSQVSDSSDSRAGRWAGTQKTECGLHTSD</sequence>
<reference key="1">
    <citation type="journal article" date="2002" name="Nucleic Acids Res.">
        <title>Genome sequence of Oceanobacillus iheyensis isolated from the Iheya Ridge and its unexpected adaptive capabilities to extreme environments.</title>
        <authorList>
            <person name="Takami H."/>
            <person name="Takaki Y."/>
            <person name="Uchiyama I."/>
        </authorList>
    </citation>
    <scope>NUCLEOTIDE SEQUENCE [LARGE SCALE GENOMIC DNA]</scope>
    <source>
        <strain>DSM 14371 / CIP 107618 / JCM 11309 / KCTC 3954 / HTE831</strain>
    </source>
</reference>
<dbReference type="EC" id="1.8.4.10" evidence="1"/>
<dbReference type="EMBL" id="BA000028">
    <property type="protein sequence ID" value="BAC13608.1"/>
    <property type="molecule type" value="Genomic_DNA"/>
</dbReference>
<dbReference type="RefSeq" id="WP_011066053.1">
    <property type="nucleotide sequence ID" value="NC_004193.1"/>
</dbReference>
<dbReference type="SMR" id="Q8EQP2"/>
<dbReference type="STRING" id="221109.gene:10733892"/>
<dbReference type="KEGG" id="oih:OB1652"/>
<dbReference type="eggNOG" id="COG0175">
    <property type="taxonomic scope" value="Bacteria"/>
</dbReference>
<dbReference type="HOGENOM" id="CLU_044089_2_0_9"/>
<dbReference type="OrthoDB" id="9772604at2"/>
<dbReference type="PhylomeDB" id="Q8EQP2"/>
<dbReference type="Proteomes" id="UP000000822">
    <property type="component" value="Chromosome"/>
</dbReference>
<dbReference type="GO" id="GO:0005737">
    <property type="term" value="C:cytoplasm"/>
    <property type="evidence" value="ECO:0007669"/>
    <property type="project" value="UniProtKB-SubCell"/>
</dbReference>
<dbReference type="GO" id="GO:0051539">
    <property type="term" value="F:4 iron, 4 sulfur cluster binding"/>
    <property type="evidence" value="ECO:0007669"/>
    <property type="project" value="UniProtKB-UniRule"/>
</dbReference>
<dbReference type="GO" id="GO:0043866">
    <property type="term" value="F:adenylyl-sulfate reductase (thioredoxin) activity"/>
    <property type="evidence" value="ECO:0007669"/>
    <property type="project" value="UniProtKB-EC"/>
</dbReference>
<dbReference type="GO" id="GO:0046872">
    <property type="term" value="F:metal ion binding"/>
    <property type="evidence" value="ECO:0007669"/>
    <property type="project" value="UniProtKB-KW"/>
</dbReference>
<dbReference type="GO" id="GO:0004604">
    <property type="term" value="F:phosphoadenylyl-sulfate reductase (thioredoxin) activity"/>
    <property type="evidence" value="ECO:0007669"/>
    <property type="project" value="UniProtKB-UniRule"/>
</dbReference>
<dbReference type="GO" id="GO:0019344">
    <property type="term" value="P:cysteine biosynthetic process"/>
    <property type="evidence" value="ECO:0007669"/>
    <property type="project" value="InterPro"/>
</dbReference>
<dbReference type="GO" id="GO:0070814">
    <property type="term" value="P:hydrogen sulfide biosynthetic process"/>
    <property type="evidence" value="ECO:0007669"/>
    <property type="project" value="UniProtKB-UniRule"/>
</dbReference>
<dbReference type="GO" id="GO:0019379">
    <property type="term" value="P:sulfate assimilation, phosphoadenylyl sulfate reduction by phosphoadenylyl-sulfate reductase (thioredoxin)"/>
    <property type="evidence" value="ECO:0007669"/>
    <property type="project" value="UniProtKB-UniRule"/>
</dbReference>
<dbReference type="CDD" id="cd23945">
    <property type="entry name" value="PAPS_reductase"/>
    <property type="match status" value="1"/>
</dbReference>
<dbReference type="FunFam" id="3.40.50.620:FF:000095">
    <property type="entry name" value="Phosphoadenosine phosphosulfate reductase"/>
    <property type="match status" value="1"/>
</dbReference>
<dbReference type="Gene3D" id="3.40.50.620">
    <property type="entry name" value="HUPs"/>
    <property type="match status" value="1"/>
</dbReference>
<dbReference type="HAMAP" id="MF_00063">
    <property type="entry name" value="CysH"/>
    <property type="match status" value="1"/>
</dbReference>
<dbReference type="InterPro" id="IPR011798">
    <property type="entry name" value="APS_reductase"/>
</dbReference>
<dbReference type="InterPro" id="IPR004511">
    <property type="entry name" value="PAPS/APS_Rdtase"/>
</dbReference>
<dbReference type="InterPro" id="IPR002500">
    <property type="entry name" value="PAPS_reduct_dom"/>
</dbReference>
<dbReference type="InterPro" id="IPR014729">
    <property type="entry name" value="Rossmann-like_a/b/a_fold"/>
</dbReference>
<dbReference type="NCBIfam" id="TIGR02055">
    <property type="entry name" value="APS_reductase"/>
    <property type="match status" value="1"/>
</dbReference>
<dbReference type="NCBIfam" id="TIGR00434">
    <property type="entry name" value="cysH"/>
    <property type="match status" value="1"/>
</dbReference>
<dbReference type="NCBIfam" id="NF002537">
    <property type="entry name" value="PRK02090.1"/>
    <property type="match status" value="1"/>
</dbReference>
<dbReference type="PANTHER" id="PTHR46509">
    <property type="entry name" value="PHOSPHOADENOSINE PHOSPHOSULFATE REDUCTASE"/>
    <property type="match status" value="1"/>
</dbReference>
<dbReference type="PANTHER" id="PTHR46509:SF1">
    <property type="entry name" value="PHOSPHOADENOSINE PHOSPHOSULFATE REDUCTASE"/>
    <property type="match status" value="1"/>
</dbReference>
<dbReference type="Pfam" id="PF01507">
    <property type="entry name" value="PAPS_reduct"/>
    <property type="match status" value="1"/>
</dbReference>
<dbReference type="PIRSF" id="PIRSF000857">
    <property type="entry name" value="PAPS_reductase"/>
    <property type="match status" value="1"/>
</dbReference>
<dbReference type="SUPFAM" id="SSF52402">
    <property type="entry name" value="Adenine nucleotide alpha hydrolases-like"/>
    <property type="match status" value="1"/>
</dbReference>
<accession>Q8EQP2</accession>
<organism>
    <name type="scientific">Oceanobacillus iheyensis (strain DSM 14371 / CIP 107618 / JCM 11309 / KCTC 3954 / HTE831)</name>
    <dbReference type="NCBI Taxonomy" id="221109"/>
    <lineage>
        <taxon>Bacteria</taxon>
        <taxon>Bacillati</taxon>
        <taxon>Bacillota</taxon>
        <taxon>Bacilli</taxon>
        <taxon>Bacillales</taxon>
        <taxon>Bacillaceae</taxon>
        <taxon>Oceanobacillus</taxon>
    </lineage>
</organism>
<evidence type="ECO:0000255" key="1">
    <source>
        <dbReference type="HAMAP-Rule" id="MF_00063"/>
    </source>
</evidence>
<comment type="function">
    <text evidence="1">Catalyzes the formation of sulfite from adenosine 5'-phosphosulfate (APS) using thioredoxin as an electron donor.</text>
</comment>
<comment type="catalytic activity">
    <reaction evidence="1">
        <text>[thioredoxin]-disulfide + sulfite + AMP + 2 H(+) = adenosine 5'-phosphosulfate + [thioredoxin]-dithiol</text>
        <dbReference type="Rhea" id="RHEA:21976"/>
        <dbReference type="Rhea" id="RHEA-COMP:10698"/>
        <dbReference type="Rhea" id="RHEA-COMP:10700"/>
        <dbReference type="ChEBI" id="CHEBI:15378"/>
        <dbReference type="ChEBI" id="CHEBI:17359"/>
        <dbReference type="ChEBI" id="CHEBI:29950"/>
        <dbReference type="ChEBI" id="CHEBI:50058"/>
        <dbReference type="ChEBI" id="CHEBI:58243"/>
        <dbReference type="ChEBI" id="CHEBI:456215"/>
        <dbReference type="EC" id="1.8.4.10"/>
    </reaction>
</comment>
<comment type="cofactor">
    <cofactor evidence="1">
        <name>[4Fe-4S] cluster</name>
        <dbReference type="ChEBI" id="CHEBI:49883"/>
    </cofactor>
    <text evidence="1">Binds 1 [4Fe-4S] cluster per subunit.</text>
</comment>
<comment type="pathway">
    <text evidence="1">Sulfur metabolism; hydrogen sulfide biosynthesis; sulfite from sulfate.</text>
</comment>
<comment type="subcellular location">
    <subcellularLocation>
        <location evidence="1">Cytoplasm</location>
    </subcellularLocation>
</comment>
<comment type="similarity">
    <text evidence="1">Belongs to the PAPS reductase family. CysH subfamily.</text>
</comment>